<proteinExistence type="inferred from homology"/>
<protein>
    <recommendedName>
        <fullName evidence="1">Uracil phosphoribosyltransferase</fullName>
        <ecNumber evidence="1">2.4.2.9</ecNumber>
    </recommendedName>
    <alternativeName>
        <fullName evidence="1">UMP pyrophosphorylase</fullName>
    </alternativeName>
    <alternativeName>
        <fullName evidence="1">UPRTase</fullName>
    </alternativeName>
</protein>
<gene>
    <name evidence="1" type="primary">upp</name>
    <name type="ordered locus">MS1880</name>
</gene>
<accession>Q65RC3</accession>
<feature type="chain" id="PRO_0000120847" description="Uracil phosphoribosyltransferase">
    <location>
        <begin position="1"/>
        <end position="208"/>
    </location>
</feature>
<feature type="binding site" evidence="1">
    <location>
        <position position="78"/>
    </location>
    <ligand>
        <name>5-phospho-alpha-D-ribose 1-diphosphate</name>
        <dbReference type="ChEBI" id="CHEBI:58017"/>
    </ligand>
</feature>
<feature type="binding site" evidence="1">
    <location>
        <position position="103"/>
    </location>
    <ligand>
        <name>5-phospho-alpha-D-ribose 1-diphosphate</name>
        <dbReference type="ChEBI" id="CHEBI:58017"/>
    </ligand>
</feature>
<feature type="binding site" evidence="1">
    <location>
        <begin position="130"/>
        <end position="138"/>
    </location>
    <ligand>
        <name>5-phospho-alpha-D-ribose 1-diphosphate</name>
        <dbReference type="ChEBI" id="CHEBI:58017"/>
    </ligand>
</feature>
<feature type="binding site" evidence="1">
    <location>
        <position position="193"/>
    </location>
    <ligand>
        <name>uracil</name>
        <dbReference type="ChEBI" id="CHEBI:17568"/>
    </ligand>
</feature>
<feature type="binding site" evidence="1">
    <location>
        <begin position="198"/>
        <end position="200"/>
    </location>
    <ligand>
        <name>uracil</name>
        <dbReference type="ChEBI" id="CHEBI:17568"/>
    </ligand>
</feature>
<feature type="binding site" evidence="1">
    <location>
        <position position="199"/>
    </location>
    <ligand>
        <name>5-phospho-alpha-D-ribose 1-diphosphate</name>
        <dbReference type="ChEBI" id="CHEBI:58017"/>
    </ligand>
</feature>
<keyword id="KW-0021">Allosteric enzyme</keyword>
<keyword id="KW-0328">Glycosyltransferase</keyword>
<keyword id="KW-0342">GTP-binding</keyword>
<keyword id="KW-0460">Magnesium</keyword>
<keyword id="KW-0547">Nucleotide-binding</keyword>
<keyword id="KW-0808">Transferase</keyword>
<name>UPP_MANSM</name>
<comment type="function">
    <text evidence="1">Catalyzes the conversion of uracil and 5-phospho-alpha-D-ribose 1-diphosphate (PRPP) to UMP and diphosphate.</text>
</comment>
<comment type="catalytic activity">
    <reaction evidence="1">
        <text>UMP + diphosphate = 5-phospho-alpha-D-ribose 1-diphosphate + uracil</text>
        <dbReference type="Rhea" id="RHEA:13017"/>
        <dbReference type="ChEBI" id="CHEBI:17568"/>
        <dbReference type="ChEBI" id="CHEBI:33019"/>
        <dbReference type="ChEBI" id="CHEBI:57865"/>
        <dbReference type="ChEBI" id="CHEBI:58017"/>
        <dbReference type="EC" id="2.4.2.9"/>
    </reaction>
</comment>
<comment type="cofactor">
    <cofactor evidence="1">
        <name>Mg(2+)</name>
        <dbReference type="ChEBI" id="CHEBI:18420"/>
    </cofactor>
    <text evidence="1">Binds 1 Mg(2+) ion per subunit. The magnesium is bound as Mg-PRPP.</text>
</comment>
<comment type="activity regulation">
    <text evidence="1">Allosterically activated by GTP.</text>
</comment>
<comment type="pathway">
    <text evidence="1">Pyrimidine metabolism; UMP biosynthesis via salvage pathway; UMP from uracil: step 1/1.</text>
</comment>
<comment type="similarity">
    <text evidence="1">Belongs to the UPRTase family.</text>
</comment>
<evidence type="ECO:0000255" key="1">
    <source>
        <dbReference type="HAMAP-Rule" id="MF_01218"/>
    </source>
</evidence>
<sequence length="208" mass="22633">MKLVEVKHPLVKHKLGLMRAADVSTKHFRELATEVGSLLTYEATADLETEIVTIEGWCGPVEVQRIKGKKVTVVPILRAGLGMMDGVLEHIPSARISVVGMYRDEETLEPVPYFQKLASDIEERLAIVVDPMLATGGSMIATIDLLKQKGCKHIKVLVLVAAPEGIKALESAHPDIELYTASIDDHLNQDGYIIPGLGDAGDKIFGTK</sequence>
<reference key="1">
    <citation type="journal article" date="2004" name="Nat. Biotechnol.">
        <title>The genome sequence of the capnophilic rumen bacterium Mannheimia succiniciproducens.</title>
        <authorList>
            <person name="Hong S.H."/>
            <person name="Kim J.S."/>
            <person name="Lee S.Y."/>
            <person name="In Y.H."/>
            <person name="Choi S.S."/>
            <person name="Rih J.-K."/>
            <person name="Kim C.H."/>
            <person name="Jeong H."/>
            <person name="Hur C.G."/>
            <person name="Kim J.J."/>
        </authorList>
    </citation>
    <scope>NUCLEOTIDE SEQUENCE [LARGE SCALE GENOMIC DNA]</scope>
    <source>
        <strain>KCTC 0769BP / MBEL55E</strain>
    </source>
</reference>
<dbReference type="EC" id="2.4.2.9" evidence="1"/>
<dbReference type="EMBL" id="AE016827">
    <property type="protein sequence ID" value="AAU38487.1"/>
    <property type="molecule type" value="Genomic_DNA"/>
</dbReference>
<dbReference type="RefSeq" id="WP_011201040.1">
    <property type="nucleotide sequence ID" value="NC_006300.1"/>
</dbReference>
<dbReference type="SMR" id="Q65RC3"/>
<dbReference type="STRING" id="221988.MS1880"/>
<dbReference type="KEGG" id="msu:MS1880"/>
<dbReference type="eggNOG" id="COG0035">
    <property type="taxonomic scope" value="Bacteria"/>
</dbReference>
<dbReference type="HOGENOM" id="CLU_067096_2_2_6"/>
<dbReference type="OrthoDB" id="9781675at2"/>
<dbReference type="UniPathway" id="UPA00574">
    <property type="reaction ID" value="UER00636"/>
</dbReference>
<dbReference type="Proteomes" id="UP000000607">
    <property type="component" value="Chromosome"/>
</dbReference>
<dbReference type="GO" id="GO:0005525">
    <property type="term" value="F:GTP binding"/>
    <property type="evidence" value="ECO:0007669"/>
    <property type="project" value="UniProtKB-KW"/>
</dbReference>
<dbReference type="GO" id="GO:0000287">
    <property type="term" value="F:magnesium ion binding"/>
    <property type="evidence" value="ECO:0007669"/>
    <property type="project" value="UniProtKB-UniRule"/>
</dbReference>
<dbReference type="GO" id="GO:0004845">
    <property type="term" value="F:uracil phosphoribosyltransferase activity"/>
    <property type="evidence" value="ECO:0007669"/>
    <property type="project" value="UniProtKB-UniRule"/>
</dbReference>
<dbReference type="GO" id="GO:0044206">
    <property type="term" value="P:UMP salvage"/>
    <property type="evidence" value="ECO:0007669"/>
    <property type="project" value="UniProtKB-UniRule"/>
</dbReference>
<dbReference type="GO" id="GO:0006223">
    <property type="term" value="P:uracil salvage"/>
    <property type="evidence" value="ECO:0007669"/>
    <property type="project" value="InterPro"/>
</dbReference>
<dbReference type="CDD" id="cd06223">
    <property type="entry name" value="PRTases_typeI"/>
    <property type="match status" value="1"/>
</dbReference>
<dbReference type="FunFam" id="3.40.50.2020:FF:000003">
    <property type="entry name" value="Uracil phosphoribosyltransferase"/>
    <property type="match status" value="1"/>
</dbReference>
<dbReference type="Gene3D" id="3.40.50.2020">
    <property type="match status" value="1"/>
</dbReference>
<dbReference type="HAMAP" id="MF_01218_B">
    <property type="entry name" value="Upp_B"/>
    <property type="match status" value="1"/>
</dbReference>
<dbReference type="InterPro" id="IPR000836">
    <property type="entry name" value="PRibTrfase_dom"/>
</dbReference>
<dbReference type="InterPro" id="IPR029057">
    <property type="entry name" value="PRTase-like"/>
</dbReference>
<dbReference type="InterPro" id="IPR034332">
    <property type="entry name" value="Upp_B"/>
</dbReference>
<dbReference type="InterPro" id="IPR050054">
    <property type="entry name" value="UPRTase/APRTase"/>
</dbReference>
<dbReference type="InterPro" id="IPR005765">
    <property type="entry name" value="Ura_phspho_trans"/>
</dbReference>
<dbReference type="NCBIfam" id="NF001097">
    <property type="entry name" value="PRK00129.1"/>
    <property type="match status" value="1"/>
</dbReference>
<dbReference type="NCBIfam" id="TIGR01091">
    <property type="entry name" value="upp"/>
    <property type="match status" value="1"/>
</dbReference>
<dbReference type="PANTHER" id="PTHR32315">
    <property type="entry name" value="ADENINE PHOSPHORIBOSYLTRANSFERASE"/>
    <property type="match status" value="1"/>
</dbReference>
<dbReference type="PANTHER" id="PTHR32315:SF4">
    <property type="entry name" value="URACIL PHOSPHORIBOSYLTRANSFERASE, CHLOROPLASTIC"/>
    <property type="match status" value="1"/>
</dbReference>
<dbReference type="Pfam" id="PF14681">
    <property type="entry name" value="UPRTase"/>
    <property type="match status" value="1"/>
</dbReference>
<dbReference type="SUPFAM" id="SSF53271">
    <property type="entry name" value="PRTase-like"/>
    <property type="match status" value="1"/>
</dbReference>
<organism>
    <name type="scientific">Mannheimia succiniciproducens (strain KCTC 0769BP / MBEL55E)</name>
    <dbReference type="NCBI Taxonomy" id="221988"/>
    <lineage>
        <taxon>Bacteria</taxon>
        <taxon>Pseudomonadati</taxon>
        <taxon>Pseudomonadota</taxon>
        <taxon>Gammaproteobacteria</taxon>
        <taxon>Pasteurellales</taxon>
        <taxon>Pasteurellaceae</taxon>
        <taxon>Basfia</taxon>
    </lineage>
</organism>